<name>PEMT_RAT</name>
<reference key="1">
    <citation type="journal article" date="1993" name="J. Biol. Chem.">
        <title>Cloning and expression of a novel phosphatidylethanolamine N-methyltransferase. A specific biochemical and cytological marker for a unique membrane fraction in rat liver.</title>
        <authorList>
            <person name="Cui Z."/>
            <person name="Vance J.E."/>
            <person name="Chen M.H."/>
            <person name="Voelker D.R."/>
            <person name="Vance D.E."/>
        </authorList>
    </citation>
    <scope>NUCLEOTIDE SEQUENCE [MRNA]</scope>
    <scope>FUNCTION</scope>
    <scope>CATALYTIC ACTIVITY</scope>
    <scope>SUBCELLULAR LOCATION</scope>
    <scope>TISSUE SPECIFICITY</scope>
    <source>
        <tissue>Liver</tissue>
    </source>
</reference>
<reference key="2">
    <citation type="journal article" date="2004" name="Genome Res.">
        <title>The status, quality, and expansion of the NIH full-length cDNA project: the Mammalian Gene Collection (MGC).</title>
        <authorList>
            <consortium name="The MGC Project Team"/>
        </authorList>
    </citation>
    <scope>NUCLEOTIDE SEQUENCE [LARGE SCALE MRNA]</scope>
    <source>
        <tissue>Liver</tissue>
    </source>
</reference>
<reference key="3">
    <citation type="thesis" date="1988" institute="University of British Columbia" country="Canada">
        <authorList>
            <person name="Ridgway N.D."/>
        </authorList>
    </citation>
    <scope>PROTEIN SEQUENCE OF 2-31</scope>
</reference>
<reference key="4">
    <citation type="journal article" date="1987" name="J. Biol. Chem.">
        <title>Purification of phosphatidylethanolamine N-methyltransferase from rat liver.</title>
        <authorList>
            <person name="Ridgway N.D."/>
            <person name="Vance D.E."/>
        </authorList>
    </citation>
    <scope>FUNCTION</scope>
    <scope>CATALYTIC ACTIVITY</scope>
    <scope>BIOPHYSICOCHEMICAL PROPERTIES</scope>
    <scope>PATHWAY</scope>
</reference>
<reference key="5">
    <citation type="journal article" date="1988" name="J. Biol. Chem.">
        <title>Specificity of rat hepatic phosphatidylethanolamine N-methyltransferase for molecular species of diacyl phosphatidylethanolamine.</title>
        <authorList>
            <person name="Ridgway N.D."/>
            <person name="Vance D.E."/>
        </authorList>
    </citation>
    <scope>FUNCTION</scope>
    <scope>CATALYTIC ACTIVITY</scope>
</reference>
<dbReference type="EC" id="2.1.1.17" evidence="8 9 10"/>
<dbReference type="EC" id="2.1.1.71" evidence="8 9 10"/>
<dbReference type="EMBL" id="L14441">
    <property type="protein sequence ID" value="AAA03154.1"/>
    <property type="molecule type" value="mRNA"/>
</dbReference>
<dbReference type="EMBL" id="BC091162">
    <property type="protein sequence ID" value="AAH91162.1"/>
    <property type="molecule type" value="mRNA"/>
</dbReference>
<dbReference type="PIR" id="A47353">
    <property type="entry name" value="A47353"/>
</dbReference>
<dbReference type="RefSeq" id="NP_037135.1">
    <property type="nucleotide sequence ID" value="NM_013003.2"/>
</dbReference>
<dbReference type="FunCoup" id="Q08388">
    <property type="interactions" value="32"/>
</dbReference>
<dbReference type="STRING" id="10116.ENSRNOP00000074801"/>
<dbReference type="PaxDb" id="10116-ENSRNOP00000004488"/>
<dbReference type="GeneID" id="25511"/>
<dbReference type="KEGG" id="rno:25511"/>
<dbReference type="AGR" id="RGD:3297"/>
<dbReference type="CTD" id="10400"/>
<dbReference type="RGD" id="3297">
    <property type="gene designation" value="Pemt"/>
</dbReference>
<dbReference type="VEuPathDB" id="HostDB:ENSRNOG00000054423"/>
<dbReference type="eggNOG" id="KOG4142">
    <property type="taxonomic scope" value="Eukaryota"/>
</dbReference>
<dbReference type="HOGENOM" id="CLU_086119_0_1_1"/>
<dbReference type="InParanoid" id="Q08388"/>
<dbReference type="PhylomeDB" id="Q08388"/>
<dbReference type="BioCyc" id="MetaCyc:MONOMER-16675"/>
<dbReference type="BRENDA" id="2.1.1.17">
    <property type="organism ID" value="5301"/>
</dbReference>
<dbReference type="Reactome" id="R-RNO-1483191">
    <property type="pathway name" value="Synthesis of PC"/>
</dbReference>
<dbReference type="UniPathway" id="UPA00753"/>
<dbReference type="PRO" id="PR:Q08388"/>
<dbReference type="Proteomes" id="UP000002494">
    <property type="component" value="Chromosome 10"/>
</dbReference>
<dbReference type="Bgee" id="ENSRNOG00000054423">
    <property type="expression patterns" value="Expressed in liver and 19 other cell types or tissues"/>
</dbReference>
<dbReference type="GO" id="GO:0031526">
    <property type="term" value="C:brush border membrane"/>
    <property type="evidence" value="ECO:0000314"/>
    <property type="project" value="RGD"/>
</dbReference>
<dbReference type="GO" id="GO:0005789">
    <property type="term" value="C:endoplasmic reticulum membrane"/>
    <property type="evidence" value="ECO:0000266"/>
    <property type="project" value="RGD"/>
</dbReference>
<dbReference type="GO" id="GO:0031966">
    <property type="term" value="C:mitochondrial membrane"/>
    <property type="evidence" value="ECO:0007669"/>
    <property type="project" value="UniProtKB-SubCell"/>
</dbReference>
<dbReference type="GO" id="GO:0042383">
    <property type="term" value="C:sarcolemma"/>
    <property type="evidence" value="ECO:0000314"/>
    <property type="project" value="RGD"/>
</dbReference>
<dbReference type="GO" id="GO:0000773">
    <property type="term" value="F:phosphatidyl-N-methylethanolamine N-methyltransferase activity"/>
    <property type="evidence" value="ECO:0007669"/>
    <property type="project" value="UniProtKB-UniRule"/>
</dbReference>
<dbReference type="GO" id="GO:0008429">
    <property type="term" value="F:phosphatidylethanolamine binding"/>
    <property type="evidence" value="ECO:0000314"/>
    <property type="project" value="RGD"/>
</dbReference>
<dbReference type="GO" id="GO:0004608">
    <property type="term" value="F:phosphatidylethanolamine N-methyltransferase activity"/>
    <property type="evidence" value="ECO:0000314"/>
    <property type="project" value="RGD"/>
</dbReference>
<dbReference type="GO" id="GO:0008757">
    <property type="term" value="F:S-adenosylmethionine-dependent methyltransferase activity"/>
    <property type="evidence" value="ECO:0000314"/>
    <property type="project" value="RGD"/>
</dbReference>
<dbReference type="GO" id="GO:0001835">
    <property type="term" value="P:blastocyst hatching"/>
    <property type="evidence" value="ECO:0000266"/>
    <property type="project" value="RGD"/>
</dbReference>
<dbReference type="GO" id="GO:0006650">
    <property type="term" value="P:glycerophospholipid metabolic process"/>
    <property type="evidence" value="ECO:0000315"/>
    <property type="project" value="RGD"/>
</dbReference>
<dbReference type="GO" id="GO:0032259">
    <property type="term" value="P:methylation"/>
    <property type="evidence" value="ECO:0007669"/>
    <property type="project" value="UniProtKB-KW"/>
</dbReference>
<dbReference type="GO" id="GO:0008285">
    <property type="term" value="P:negative regulation of cell population proliferation"/>
    <property type="evidence" value="ECO:0000315"/>
    <property type="project" value="RGD"/>
</dbReference>
<dbReference type="GO" id="GO:0006656">
    <property type="term" value="P:phosphatidylcholine biosynthetic process"/>
    <property type="evidence" value="ECO:0000314"/>
    <property type="project" value="RGD"/>
</dbReference>
<dbReference type="GO" id="GO:0120162">
    <property type="term" value="P:positive regulation of cold-induced thermogenesis"/>
    <property type="evidence" value="ECO:0000250"/>
    <property type="project" value="YuBioLab"/>
</dbReference>
<dbReference type="GO" id="GO:0050747">
    <property type="term" value="P:positive regulation of lipoprotein metabolic process"/>
    <property type="evidence" value="ECO:0000315"/>
    <property type="project" value="RGD"/>
</dbReference>
<dbReference type="GO" id="GO:0043200">
    <property type="term" value="P:response to amino acid"/>
    <property type="evidence" value="ECO:0000270"/>
    <property type="project" value="RGD"/>
</dbReference>
<dbReference type="GO" id="GO:0045471">
    <property type="term" value="P:response to ethanol"/>
    <property type="evidence" value="ECO:0000270"/>
    <property type="project" value="RGD"/>
</dbReference>
<dbReference type="GO" id="GO:0007584">
    <property type="term" value="P:response to nutrient"/>
    <property type="evidence" value="ECO:0000270"/>
    <property type="project" value="RGD"/>
</dbReference>
<dbReference type="GO" id="GO:0033273">
    <property type="term" value="P:response to vitamin"/>
    <property type="evidence" value="ECO:0000314"/>
    <property type="project" value="RGD"/>
</dbReference>
<dbReference type="GO" id="GO:0009410">
    <property type="term" value="P:response to xenobiotic stimulus"/>
    <property type="evidence" value="ECO:0000314"/>
    <property type="project" value="RGD"/>
</dbReference>
<dbReference type="GO" id="GO:0046498">
    <property type="term" value="P:S-adenosylhomocysteine metabolic process"/>
    <property type="evidence" value="ECO:0000314"/>
    <property type="project" value="RGD"/>
</dbReference>
<dbReference type="GO" id="GO:0046500">
    <property type="term" value="P:S-adenosylmethionine metabolic process"/>
    <property type="evidence" value="ECO:0000314"/>
    <property type="project" value="RGD"/>
</dbReference>
<dbReference type="GO" id="GO:0006686">
    <property type="term" value="P:sphingomyelin biosynthetic process"/>
    <property type="evidence" value="ECO:0000266"/>
    <property type="project" value="RGD"/>
</dbReference>
<dbReference type="FunFam" id="1.20.120.1630:FF:000005">
    <property type="entry name" value="Phosphatidylethanolamine N-methyltransferase"/>
    <property type="match status" value="1"/>
</dbReference>
<dbReference type="Gene3D" id="1.20.120.1630">
    <property type="match status" value="1"/>
</dbReference>
<dbReference type="HAMAP" id="MF_03216">
    <property type="entry name" value="PLMT"/>
    <property type="match status" value="1"/>
</dbReference>
<dbReference type="InterPro" id="IPR024960">
    <property type="entry name" value="PEMT/MFAP"/>
</dbReference>
<dbReference type="InterPro" id="IPR007318">
    <property type="entry name" value="Phopholipid_MeTrfase"/>
</dbReference>
<dbReference type="PANTHER" id="PTHR15458">
    <property type="entry name" value="PHOSPHATIDYLETHANOLAMINE N-METHYLTRANSFERASE"/>
    <property type="match status" value="1"/>
</dbReference>
<dbReference type="PANTHER" id="PTHR15458:SF5">
    <property type="entry name" value="PHOSPHATIDYLETHANOLAMINE N-METHYLTRANSFERASE"/>
    <property type="match status" value="1"/>
</dbReference>
<dbReference type="Pfam" id="PF04191">
    <property type="entry name" value="PEMT"/>
    <property type="match status" value="1"/>
</dbReference>
<dbReference type="PIRSF" id="PIRSF005444">
    <property type="entry name" value="PEMT"/>
    <property type="match status" value="1"/>
</dbReference>
<dbReference type="PROSITE" id="PS51599">
    <property type="entry name" value="SAM_PEMT_PEM2"/>
    <property type="match status" value="1"/>
</dbReference>
<gene>
    <name evidence="2" type="primary">Pemt</name>
    <name type="synonym">Pempt</name>
</gene>
<feature type="initiator methionine" description="Removed" evidence="4">
    <location>
        <position position="1"/>
    </location>
</feature>
<feature type="chain" id="PRO_0000193922" description="Phosphatidylethanolamine N-methyltransferase">
    <location>
        <begin position="2"/>
        <end position="199"/>
    </location>
</feature>
<feature type="topological domain" description="Lumenal" evidence="2">
    <location>
        <begin position="2"/>
        <end position="12"/>
    </location>
</feature>
<feature type="intramembrane region" description="Helical" evidence="2">
    <location>
        <begin position="13"/>
        <end position="33"/>
    </location>
</feature>
<feature type="topological domain" description="Lumenal" evidence="2">
    <location>
        <begin position="34"/>
        <end position="45"/>
    </location>
</feature>
<feature type="transmembrane region" description="Helical" evidence="2">
    <location>
        <begin position="46"/>
        <end position="66"/>
    </location>
</feature>
<feature type="topological domain" description="Cytoplasmic" evidence="2">
    <location>
        <begin position="67"/>
        <end position="93"/>
    </location>
</feature>
<feature type="transmembrane region" description="Helical" evidence="2">
    <location>
        <begin position="94"/>
        <end position="114"/>
    </location>
</feature>
<feature type="topological domain" description="Lumenal" evidence="2">
    <location>
        <begin position="115"/>
        <end position="157"/>
    </location>
</feature>
<feature type="transmembrane region" description="Helical" evidence="2">
    <location>
        <begin position="158"/>
        <end position="178"/>
    </location>
</feature>
<feature type="topological domain" description="Cytoplasmic" evidence="2">
    <location>
        <begin position="179"/>
        <end position="199"/>
    </location>
</feature>
<feature type="binding site" evidence="2">
    <location>
        <begin position="98"/>
        <end position="100"/>
    </location>
    <ligand>
        <name>S-adenosyl-L-methionine</name>
        <dbReference type="ChEBI" id="CHEBI:59789"/>
    </ligand>
</feature>
<feature type="binding site" evidence="2">
    <location>
        <begin position="180"/>
        <end position="181"/>
    </location>
    <ligand>
        <name>S-adenosyl-L-methionine</name>
        <dbReference type="ChEBI" id="CHEBI:59789"/>
    </ligand>
</feature>
<comment type="function">
    <text evidence="3 8 9">Catalyzes the three sequential steps of the methylation pathway for the biosynthesis of phosphatidylcholine, a critical and essential component for membrane structure (Probable) (PubMed:8344945). Uses S-adenosylmethionine (S-adenosyl-L-methionine, SAM or AdoMet) as the methyl group donor for the methylation of phosphatidylethanolamine (1,2-diacyl-sn-glycero-3-phosphoethanolamine, PE) to phosphatidylmonomethylethanolamine (1,2-diacyl-sn-glycero-3-phospho-N-methylethanolamine, PMME), PMME to phosphatidyldimethylethanolamine (1,2-diacyl-sn-glycero-3-phospho-N,N-dimethylethanolamine, PDME), and PDME to phosphatidylcholine (1,2-diacyl-sn-glycero-3-phosphocholine, PC), producing S-adenosyl-L-homocysteine in each step (Probable) (PubMed:8344945).</text>
</comment>
<comment type="catalytic activity">
    <reaction evidence="8 9 10">
        <text>a 1,2-diacyl-sn-glycero-3-phosphoethanolamine + S-adenosyl-L-methionine = a 1,2-diacyl-sn-glycero-3-phospho-N-methylethanolamine + S-adenosyl-L-homocysteine + H(+)</text>
        <dbReference type="Rhea" id="RHEA:11164"/>
        <dbReference type="ChEBI" id="CHEBI:15378"/>
        <dbReference type="ChEBI" id="CHEBI:57856"/>
        <dbReference type="ChEBI" id="CHEBI:59789"/>
        <dbReference type="ChEBI" id="CHEBI:64573"/>
        <dbReference type="ChEBI" id="CHEBI:64612"/>
        <dbReference type="EC" id="2.1.1.17"/>
    </reaction>
    <physiologicalReaction direction="left-to-right" evidence="8 9 10">
        <dbReference type="Rhea" id="RHEA:11165"/>
    </physiologicalReaction>
</comment>
<comment type="catalytic activity">
    <reaction evidence="8 9 10">
        <text>a 1,2-diacyl-sn-glycero-3-phospho-N-methylethanolamine + S-adenosyl-L-methionine = a 1,2-diacyl-sn-glycero-3-phospho-N,N-dimethylethanolamine + S-adenosyl-L-homocysteine + H(+)</text>
        <dbReference type="Rhea" id="RHEA:32735"/>
        <dbReference type="ChEBI" id="CHEBI:15378"/>
        <dbReference type="ChEBI" id="CHEBI:57856"/>
        <dbReference type="ChEBI" id="CHEBI:59789"/>
        <dbReference type="ChEBI" id="CHEBI:64572"/>
        <dbReference type="ChEBI" id="CHEBI:64573"/>
        <dbReference type="EC" id="2.1.1.71"/>
    </reaction>
    <physiologicalReaction direction="left-to-right" evidence="8 9 10">
        <dbReference type="Rhea" id="RHEA:32736"/>
    </physiologicalReaction>
</comment>
<comment type="catalytic activity">
    <reaction evidence="8 9 10">
        <text>a 1,2-diacyl-sn-glycero-3-phospho-N,N-dimethylethanolamine + S-adenosyl-L-methionine = a 1,2-diacyl-sn-glycero-3-phosphocholine + S-adenosyl-L-homocysteine + H(+)</text>
        <dbReference type="Rhea" id="RHEA:32739"/>
        <dbReference type="ChEBI" id="CHEBI:15378"/>
        <dbReference type="ChEBI" id="CHEBI:57643"/>
        <dbReference type="ChEBI" id="CHEBI:57856"/>
        <dbReference type="ChEBI" id="CHEBI:59789"/>
        <dbReference type="ChEBI" id="CHEBI:64572"/>
        <dbReference type="EC" id="2.1.1.71"/>
    </reaction>
    <physiologicalReaction direction="left-to-right" evidence="8 9 10">
        <dbReference type="Rhea" id="RHEA:32740"/>
    </physiologicalReaction>
</comment>
<comment type="catalytic activity">
    <reaction evidence="8">
        <text>1,2-di-(9Z-octadecenoyl)-sn-glycero-3-phosphoethanolamine + S-adenosyl-L-methionine = 1,2-di-(9Z-octadecenoyl)-sn-glycero-3-phospho-N-methylethanolamine + S-adenosyl-L-homocysteine + H(+)</text>
        <dbReference type="Rhea" id="RHEA:70619"/>
        <dbReference type="ChEBI" id="CHEBI:15378"/>
        <dbReference type="ChEBI" id="CHEBI:57856"/>
        <dbReference type="ChEBI" id="CHEBI:59789"/>
        <dbReference type="ChEBI" id="CHEBI:74986"/>
        <dbReference type="ChEBI" id="CHEBI:85679"/>
    </reaction>
    <physiologicalReaction direction="left-to-right" evidence="8">
        <dbReference type="Rhea" id="RHEA:70620"/>
    </physiologicalReaction>
</comment>
<comment type="catalytic activity">
    <reaction evidence="8">
        <text>1,2-di-(9Z-octadecenoyl)-sn-glycero-3-phospho-N-methylethanolamine + S-adenosyl-L-methionine = 1,2-di-(9Z-octadecenoyl)-sn-glycero-3-phospho-N,N-dimethylethanolamine + S-adenosyl-L-homocysteine + H(+)</text>
        <dbReference type="Rhea" id="RHEA:46112"/>
        <dbReference type="ChEBI" id="CHEBI:15378"/>
        <dbReference type="ChEBI" id="CHEBI:57856"/>
        <dbReference type="ChEBI" id="CHEBI:59789"/>
        <dbReference type="ChEBI" id="CHEBI:85679"/>
        <dbReference type="ChEBI" id="CHEBI:85680"/>
    </reaction>
    <physiologicalReaction direction="left-to-right" evidence="8">
        <dbReference type="Rhea" id="RHEA:46113"/>
    </physiologicalReaction>
</comment>
<comment type="catalytic activity">
    <reaction evidence="8">
        <text>1,2-di-(9Z-octadecenoyl)-sn-glycero-3-phospho-N,N-dimethylethanolamine + S-adenosyl-L-methionine = 1,2-di-(9Z-octadecenoyl)-sn-glycero-3-phosphocholine + S-adenosyl-L-homocysteine + H(+)</text>
        <dbReference type="Rhea" id="RHEA:70623"/>
        <dbReference type="ChEBI" id="CHEBI:15378"/>
        <dbReference type="ChEBI" id="CHEBI:57856"/>
        <dbReference type="ChEBI" id="CHEBI:59789"/>
        <dbReference type="ChEBI" id="CHEBI:74669"/>
        <dbReference type="ChEBI" id="CHEBI:85680"/>
    </reaction>
    <physiologicalReaction direction="left-to-right" evidence="8">
        <dbReference type="Rhea" id="RHEA:70624"/>
    </physiologicalReaction>
</comment>
<comment type="catalytic activity">
    <reaction evidence="8">
        <text>1,2-di-(9Z,12Z-octadecadienoyl)-sn-glycero-3-phosphoethanolamine + S-adenosyl-L-methionine = 1,2-di-(9Z,12Z-octadecadienoyl)-sn-glycero-3-phospho-N-methylethanolamine + S-adenosyl-L-homocysteine + H(+)</text>
        <dbReference type="Rhea" id="RHEA:70739"/>
        <dbReference type="ChEBI" id="CHEBI:15378"/>
        <dbReference type="ChEBI" id="CHEBI:57856"/>
        <dbReference type="ChEBI" id="CHEBI:59789"/>
        <dbReference type="ChEBI" id="CHEBI:172403"/>
        <dbReference type="ChEBI" id="CHEBI:189848"/>
    </reaction>
    <physiologicalReaction direction="left-to-right" evidence="8">
        <dbReference type="Rhea" id="RHEA:70740"/>
    </physiologicalReaction>
</comment>
<comment type="catalytic activity">
    <reaction evidence="8">
        <text>1,2-di-(9Z,12Z-octadecadienoyl)-sn-glycero-3-phospho-N-methylethanolamine + S-adenosyl-L-methionine = 1,2-di-(9Z,12Z-octadecadienoyl)-sn-glycero-3-phospho-N,N-dimethylethanolamine + S-adenosyl-L-homocysteine + H(+)</text>
        <dbReference type="Rhea" id="RHEA:70743"/>
        <dbReference type="ChEBI" id="CHEBI:15378"/>
        <dbReference type="ChEBI" id="CHEBI:57856"/>
        <dbReference type="ChEBI" id="CHEBI:59789"/>
        <dbReference type="ChEBI" id="CHEBI:189848"/>
        <dbReference type="ChEBI" id="CHEBI:189849"/>
    </reaction>
    <physiologicalReaction direction="left-to-right" evidence="8">
        <dbReference type="Rhea" id="RHEA:70744"/>
    </physiologicalReaction>
</comment>
<comment type="catalytic activity">
    <reaction evidence="8">
        <text>1,2-di-(9Z,12Z-octadecadienoyl)-sn-glycero-3-phospho-N,N-dimethylethanolamine + S-adenosyl-L-methionine = 1,2-di-(9Z,12Z-octadecadienoyl)-sn-glycero-3-phosphocholine + S-adenosyl-L-homocysteine + H(+)</text>
        <dbReference type="Rhea" id="RHEA:70747"/>
        <dbReference type="ChEBI" id="CHEBI:15378"/>
        <dbReference type="ChEBI" id="CHEBI:42027"/>
        <dbReference type="ChEBI" id="CHEBI:57856"/>
        <dbReference type="ChEBI" id="CHEBI:59789"/>
        <dbReference type="ChEBI" id="CHEBI:189849"/>
    </reaction>
    <physiologicalReaction direction="left-to-right" evidence="8">
        <dbReference type="Rhea" id="RHEA:70748"/>
    </physiologicalReaction>
</comment>
<comment type="catalytic activity">
    <reaction evidence="8">
        <text>1,2-di-(9Z,12Z,15Z-octadecatrienoyl)-sn-glycero-3-phosphoethanolamine + S-adenosyl-L-methionine = 1,2-di-(9Z,12Z,15Z-octadecatrienoyl)-sn-glycero-3-phospho-N-methylethanolamine + S-adenosyl-L-homocysteine + H(+)</text>
        <dbReference type="Rhea" id="RHEA:70751"/>
        <dbReference type="ChEBI" id="CHEBI:15378"/>
        <dbReference type="ChEBI" id="CHEBI:57856"/>
        <dbReference type="ChEBI" id="CHEBI:59789"/>
        <dbReference type="ChEBI" id="CHEBI:189858"/>
        <dbReference type="ChEBI" id="CHEBI:189859"/>
    </reaction>
    <physiologicalReaction direction="left-to-right" evidence="8">
        <dbReference type="Rhea" id="RHEA:70752"/>
    </physiologicalReaction>
</comment>
<comment type="catalytic activity">
    <reaction evidence="8">
        <text>1,2-di-(9Z,12Z,15Z-octadecatrienoyl)-sn-glycero-3-phospho-N-methylethanolamine + S-adenosyl-L-methionine = 1,2-di-(9Z,12Z,15Z-octadecatrienoyl)-sn-glycero-3-phospho-N,N-dimethylethanolamine + S-adenosyl-L-homocysteine + H(+)</text>
        <dbReference type="Rhea" id="RHEA:70755"/>
        <dbReference type="ChEBI" id="CHEBI:15378"/>
        <dbReference type="ChEBI" id="CHEBI:57856"/>
        <dbReference type="ChEBI" id="CHEBI:59789"/>
        <dbReference type="ChEBI" id="CHEBI:189859"/>
        <dbReference type="ChEBI" id="CHEBI:189860"/>
    </reaction>
    <physiologicalReaction direction="left-to-right" evidence="8">
        <dbReference type="Rhea" id="RHEA:70756"/>
    </physiologicalReaction>
</comment>
<comment type="catalytic activity">
    <reaction evidence="8">
        <text>1,2-di-(9Z,12Z,15Z-octadecatrienoyl)-sn-glycero-3-phospho-N,N-dimethylethanolamine + S-adenosyl-L-methionine = 1,2-di-(9Z,12Z,15Z-octadecatrienoyl)-sn-glycero-3-phosphocholine + S-adenosyl-L-homocysteine + H(+)</text>
        <dbReference type="Rhea" id="RHEA:70759"/>
        <dbReference type="ChEBI" id="CHEBI:15378"/>
        <dbReference type="ChEBI" id="CHEBI:57856"/>
        <dbReference type="ChEBI" id="CHEBI:59789"/>
        <dbReference type="ChEBI" id="CHEBI:86161"/>
        <dbReference type="ChEBI" id="CHEBI:189860"/>
    </reaction>
    <physiologicalReaction direction="left-to-right" evidence="8">
        <dbReference type="Rhea" id="RHEA:70760"/>
    </physiologicalReaction>
</comment>
<comment type="catalytic activity">
    <reaction evidence="8">
        <text>1-hexadecanoyl-2-(4Z,7Z,10Z,13Z,16Z,19Z-docosahexaenoyl)-sn-glycero-3-phosphoethanolamine + S-adenosyl-L-methionine = 1-hexadecanoyl-2-(4Z,7Z,10Z,13Z,16Z,19Z-docosahexaenoyl)-sn-glycero-3-phospho-N-methylethanolamine + S-adenosyl-L-homocysteine + H(+)</text>
        <dbReference type="Rhea" id="RHEA:70763"/>
        <dbReference type="ChEBI" id="CHEBI:15378"/>
        <dbReference type="ChEBI" id="CHEBI:57856"/>
        <dbReference type="ChEBI" id="CHEBI:59789"/>
        <dbReference type="ChEBI" id="CHEBI:78261"/>
        <dbReference type="ChEBI" id="CHEBI:189861"/>
    </reaction>
    <physiologicalReaction direction="left-to-right" evidence="8">
        <dbReference type="Rhea" id="RHEA:70764"/>
    </physiologicalReaction>
</comment>
<comment type="catalytic activity">
    <reaction evidence="8">
        <text>1-hexadecanoyl-2-(4Z,7Z,10Z,13Z,16Z,19Z-docosahexaenoyl)-sn-glycero-3-phospho-N-methylethanolamine + S-adenosyl-L-methionine = 1-hexadecanoyl-2-(4Z,7Z,10Z,13Z,16Z,19Z-docosahexaenoyl)-sn-glycero-3-phospho-N,N-dimethylethanolamine + S-adenosyl-L-homocysteine + H(+)</text>
        <dbReference type="Rhea" id="RHEA:70767"/>
        <dbReference type="ChEBI" id="CHEBI:15378"/>
        <dbReference type="ChEBI" id="CHEBI:57856"/>
        <dbReference type="ChEBI" id="CHEBI:59789"/>
        <dbReference type="ChEBI" id="CHEBI:189861"/>
        <dbReference type="ChEBI" id="CHEBI:189862"/>
    </reaction>
    <physiologicalReaction direction="left-to-right" evidence="8">
        <dbReference type="Rhea" id="RHEA:70768"/>
    </physiologicalReaction>
</comment>
<comment type="catalytic activity">
    <reaction evidence="8">
        <text>1-hexadecanoyl-2-(4Z,7Z,10Z,13Z,16Z,19Z-docosahexaenoyl)-sn-glycero-3-phospho-N,N-dimethylethanolamine + S-adenosyl-L-methionine = 1-hexadecanoyl-2-(4Z,7Z,10Z,13Z,16Z,19Z-docosahexaenoyl)-sn-glycero-3-phosphocholine + S-adenosyl-L-homocysteine + H(+)</text>
        <dbReference type="Rhea" id="RHEA:70771"/>
        <dbReference type="ChEBI" id="CHEBI:15378"/>
        <dbReference type="ChEBI" id="CHEBI:57856"/>
        <dbReference type="ChEBI" id="CHEBI:59789"/>
        <dbReference type="ChEBI" id="CHEBI:74963"/>
        <dbReference type="ChEBI" id="CHEBI:189862"/>
    </reaction>
    <physiologicalReaction direction="left-to-right" evidence="8">
        <dbReference type="Rhea" id="RHEA:70772"/>
    </physiologicalReaction>
</comment>
<comment type="biophysicochemical properties">
    <phDependence>
        <text evidence="9">Optimum pH is 10.</text>
    </phDependence>
</comment>
<comment type="pathway">
    <text evidence="9">Phospholipid metabolism; phosphatidylcholine biosynthesis.</text>
</comment>
<comment type="subcellular location">
    <subcellularLocation>
        <location evidence="1">Endoplasmic reticulum membrane</location>
        <topology evidence="2">Multi-pass membrane protein</topology>
    </subcellularLocation>
    <subcellularLocation>
        <location evidence="2">Mitochondrion membrane</location>
        <topology evidence="2">Multi-pass membrane protein</topology>
    </subcellularLocation>
    <text evidence="1 3">Found in endoplasmic reticulum where most PEMT activity is generated and in mitochondria (By similarity). Located in a unique membrane in the hepatocyte, which is not recognizable as any known subcellular structure (PubMed:8344945).</text>
</comment>
<comment type="tissue specificity">
    <text evidence="3">Expressed in liver (at protein level).</text>
</comment>
<comment type="similarity">
    <text evidence="2">Belongs to the class VI-like SAM-binding methyltransferase superfamily. PEMT/PEM2 methyltransferase family.</text>
</comment>
<protein>
    <recommendedName>
        <fullName evidence="5 6 7">Phosphatidylethanolamine N-methyltransferase</fullName>
        <shortName evidence="5 6 7">PE N-methyltransferase</shortName>
        <shortName evidence="2">PEAMT</shortName>
        <shortName evidence="2">PEMT</shortName>
        <ecNumber evidence="8 9 10">2.1.1.17</ecNumber>
        <ecNumber evidence="8 9 10">2.1.1.71</ecNumber>
    </recommendedName>
    <alternativeName>
        <fullName evidence="2">Phospholipid methyltransferase</fullName>
        <shortName evidence="2">PLMT</shortName>
    </alternativeName>
</protein>
<keyword id="KW-0903">Direct protein sequencing</keyword>
<keyword id="KW-0256">Endoplasmic reticulum</keyword>
<keyword id="KW-0444">Lipid biosynthesis</keyword>
<keyword id="KW-0443">Lipid metabolism</keyword>
<keyword id="KW-0472">Membrane</keyword>
<keyword id="KW-0489">Methyltransferase</keyword>
<keyword id="KW-0496">Mitochondrion</keyword>
<keyword id="KW-0594">Phospholipid biosynthesis</keyword>
<keyword id="KW-1208">Phospholipid metabolism</keyword>
<keyword id="KW-1185">Reference proteome</keyword>
<keyword id="KW-0949">S-adenosyl-L-methionine</keyword>
<keyword id="KW-0808">Transferase</keyword>
<keyword id="KW-0812">Transmembrane</keyword>
<keyword id="KW-1133">Transmembrane helix</keyword>
<evidence type="ECO:0000250" key="1">
    <source>
        <dbReference type="UniProtKB" id="Q9UBM1"/>
    </source>
</evidence>
<evidence type="ECO:0000255" key="2">
    <source>
        <dbReference type="HAMAP-Rule" id="MF_03216"/>
    </source>
</evidence>
<evidence type="ECO:0000269" key="3">
    <source>
    </source>
</evidence>
<evidence type="ECO:0000269" key="4">
    <source ref="3"/>
</evidence>
<evidence type="ECO:0000303" key="5">
    <source>
    </source>
</evidence>
<evidence type="ECO:0000303" key="6">
    <source>
    </source>
</evidence>
<evidence type="ECO:0000303" key="7">
    <source>
    </source>
</evidence>
<evidence type="ECO:0000305" key="8">
    <source>
    </source>
</evidence>
<evidence type="ECO:0000305" key="9">
    <source>
    </source>
</evidence>
<evidence type="ECO:0000305" key="10">
    <source>
    </source>
</evidence>
<accession>Q08388</accession>
<accession>Q5BK89</accession>
<proteinExistence type="evidence at protein level"/>
<sequence length="199" mass="22486">MSWLLGYVDPTEPSFVAAVLTIVFNPLFWNVVARWEQRTRKLSRAFGSPYLACYSLGSIILLLNILRSHCFTQAMMSQPKMEGLDSHTIYFLGLALLGWGLVFVLSSFYALGFTGTFLGDYFGILKESRVTTFPFSVLDNPMYWGSTANYLGWALMHASPTGLLLTVLVALVYVVALLFEEPFTAEIYRRKATRLHKRS</sequence>
<organism>
    <name type="scientific">Rattus norvegicus</name>
    <name type="common">Rat</name>
    <dbReference type="NCBI Taxonomy" id="10116"/>
    <lineage>
        <taxon>Eukaryota</taxon>
        <taxon>Metazoa</taxon>
        <taxon>Chordata</taxon>
        <taxon>Craniata</taxon>
        <taxon>Vertebrata</taxon>
        <taxon>Euteleostomi</taxon>
        <taxon>Mammalia</taxon>
        <taxon>Eutheria</taxon>
        <taxon>Euarchontoglires</taxon>
        <taxon>Glires</taxon>
        <taxon>Rodentia</taxon>
        <taxon>Myomorpha</taxon>
        <taxon>Muroidea</taxon>
        <taxon>Muridae</taxon>
        <taxon>Murinae</taxon>
        <taxon>Rattus</taxon>
    </lineage>
</organism>